<keyword id="KW-0687">Ribonucleoprotein</keyword>
<keyword id="KW-0689">Ribosomal protein</keyword>
<gene>
    <name evidence="1" type="primary">rpsB</name>
    <name type="ordered locus">MGAS10270_Spy1847</name>
</gene>
<name>RS2_STRPD</name>
<dbReference type="EMBL" id="CP000260">
    <property type="protein sequence ID" value="ABF34912.1"/>
    <property type="molecule type" value="Genomic_DNA"/>
</dbReference>
<dbReference type="RefSeq" id="WP_002982262.1">
    <property type="nucleotide sequence ID" value="NZ_CVUH01000011.1"/>
</dbReference>
<dbReference type="SMR" id="Q1JEJ7"/>
<dbReference type="GeneID" id="69901552"/>
<dbReference type="KEGG" id="sph:MGAS10270_Spy1847"/>
<dbReference type="HOGENOM" id="CLU_040318_1_2_9"/>
<dbReference type="Proteomes" id="UP000002436">
    <property type="component" value="Chromosome"/>
</dbReference>
<dbReference type="GO" id="GO:0022627">
    <property type="term" value="C:cytosolic small ribosomal subunit"/>
    <property type="evidence" value="ECO:0007669"/>
    <property type="project" value="TreeGrafter"/>
</dbReference>
<dbReference type="GO" id="GO:0003735">
    <property type="term" value="F:structural constituent of ribosome"/>
    <property type="evidence" value="ECO:0007669"/>
    <property type="project" value="InterPro"/>
</dbReference>
<dbReference type="GO" id="GO:0006412">
    <property type="term" value="P:translation"/>
    <property type="evidence" value="ECO:0007669"/>
    <property type="project" value="UniProtKB-UniRule"/>
</dbReference>
<dbReference type="CDD" id="cd01425">
    <property type="entry name" value="RPS2"/>
    <property type="match status" value="1"/>
</dbReference>
<dbReference type="FunFam" id="1.10.287.610:FF:000001">
    <property type="entry name" value="30S ribosomal protein S2"/>
    <property type="match status" value="1"/>
</dbReference>
<dbReference type="Gene3D" id="3.40.50.10490">
    <property type="entry name" value="Glucose-6-phosphate isomerase like protein, domain 1"/>
    <property type="match status" value="1"/>
</dbReference>
<dbReference type="Gene3D" id="1.10.287.610">
    <property type="entry name" value="Helix hairpin bin"/>
    <property type="match status" value="1"/>
</dbReference>
<dbReference type="HAMAP" id="MF_00291_B">
    <property type="entry name" value="Ribosomal_uS2_B"/>
    <property type="match status" value="1"/>
</dbReference>
<dbReference type="InterPro" id="IPR001865">
    <property type="entry name" value="Ribosomal_uS2"/>
</dbReference>
<dbReference type="InterPro" id="IPR005706">
    <property type="entry name" value="Ribosomal_uS2_bac/mit/plastid"/>
</dbReference>
<dbReference type="InterPro" id="IPR018130">
    <property type="entry name" value="Ribosomal_uS2_CS"/>
</dbReference>
<dbReference type="InterPro" id="IPR023591">
    <property type="entry name" value="Ribosomal_uS2_flav_dom_sf"/>
</dbReference>
<dbReference type="NCBIfam" id="TIGR01011">
    <property type="entry name" value="rpsB_bact"/>
    <property type="match status" value="1"/>
</dbReference>
<dbReference type="PANTHER" id="PTHR12534">
    <property type="entry name" value="30S RIBOSOMAL PROTEIN S2 PROKARYOTIC AND ORGANELLAR"/>
    <property type="match status" value="1"/>
</dbReference>
<dbReference type="PANTHER" id="PTHR12534:SF0">
    <property type="entry name" value="SMALL RIBOSOMAL SUBUNIT PROTEIN US2M"/>
    <property type="match status" value="1"/>
</dbReference>
<dbReference type="Pfam" id="PF00318">
    <property type="entry name" value="Ribosomal_S2"/>
    <property type="match status" value="1"/>
</dbReference>
<dbReference type="PRINTS" id="PR00395">
    <property type="entry name" value="RIBOSOMALS2"/>
</dbReference>
<dbReference type="SUPFAM" id="SSF52313">
    <property type="entry name" value="Ribosomal protein S2"/>
    <property type="match status" value="1"/>
</dbReference>
<dbReference type="PROSITE" id="PS00962">
    <property type="entry name" value="RIBOSOMAL_S2_1"/>
    <property type="match status" value="1"/>
</dbReference>
<accession>Q1JEJ7</accession>
<evidence type="ECO:0000255" key="1">
    <source>
        <dbReference type="HAMAP-Rule" id="MF_00291"/>
    </source>
</evidence>
<evidence type="ECO:0000305" key="2"/>
<proteinExistence type="inferred from homology"/>
<reference key="1">
    <citation type="journal article" date="2006" name="Proc. Natl. Acad. Sci. U.S.A.">
        <title>Molecular genetic anatomy of inter- and intraserotype variation in the human bacterial pathogen group A Streptococcus.</title>
        <authorList>
            <person name="Beres S.B."/>
            <person name="Richter E.W."/>
            <person name="Nagiec M.J."/>
            <person name="Sumby P."/>
            <person name="Porcella S.F."/>
            <person name="DeLeo F.R."/>
            <person name="Musser J.M."/>
        </authorList>
    </citation>
    <scope>NUCLEOTIDE SEQUENCE [LARGE SCALE GENOMIC DNA]</scope>
    <source>
        <strain>MGAS10270</strain>
    </source>
</reference>
<feature type="chain" id="PRO_1000004089" description="Small ribosomal subunit protein uS2">
    <location>
        <begin position="1"/>
        <end position="255"/>
    </location>
</feature>
<comment type="similarity">
    <text evidence="1">Belongs to the universal ribosomal protein uS2 family.</text>
</comment>
<protein>
    <recommendedName>
        <fullName evidence="1">Small ribosomal subunit protein uS2</fullName>
    </recommendedName>
    <alternativeName>
        <fullName evidence="2">30S ribosomal protein S2</fullName>
    </alternativeName>
</protein>
<organism>
    <name type="scientific">Streptococcus pyogenes serotype M2 (strain MGAS10270)</name>
    <dbReference type="NCBI Taxonomy" id="370552"/>
    <lineage>
        <taxon>Bacteria</taxon>
        <taxon>Bacillati</taxon>
        <taxon>Bacillota</taxon>
        <taxon>Bacilli</taxon>
        <taxon>Lactobacillales</taxon>
        <taxon>Streptococcaceae</taxon>
        <taxon>Streptococcus</taxon>
    </lineage>
</organism>
<sequence>MAVISMKQLLEAGVHFGHQTRRWNPKMAKYIFTERNGIHVIDLQQTVKLADQAYEFVRDAAANDAVILFVGTKKQAAEAVADEATRAGQYFINHRWLGGTLTNWGTIQKRIARLKEIKRMEEEGTFDVLPKKEVALLNKQRARLEKFLGGIEDMPRIPDVMYVVDPHKEQIAVKEAKKLGIPVVAMVDTNADPDDIDIIIPANDDAIRAVKLITAKLADAIIEGRQGEDADVAFEADTQADSIEEIVEVVEGDNA</sequence>